<sequence>MKLIGITGMPGSGKSAITKLAEKYKIVVVSMGDVVRYETLKQGMPLNPENVGNTAVKLREIYGKEAIAVPCLNYVNEKYNNEDFVIIEGIRSIYEVNYIKKHAELDIIAIHSSPKTRFERLSGRNREDDSNDWNTFVERDERELNFSIGRVISLADYMVVNEGNYMDFVNDLENTFKKIINVN</sequence>
<protein>
    <recommendedName>
        <fullName evidence="1">UPF0200 protein MMP1282</fullName>
    </recommendedName>
</protein>
<accession>Q6LXR7</accession>
<organism>
    <name type="scientific">Methanococcus maripaludis (strain DSM 14266 / JCM 13030 / NBRC 101832 / S2 / LL)</name>
    <dbReference type="NCBI Taxonomy" id="267377"/>
    <lineage>
        <taxon>Archaea</taxon>
        <taxon>Methanobacteriati</taxon>
        <taxon>Methanobacteriota</taxon>
        <taxon>Methanomada group</taxon>
        <taxon>Methanococci</taxon>
        <taxon>Methanococcales</taxon>
        <taxon>Methanococcaceae</taxon>
        <taxon>Methanococcus</taxon>
    </lineage>
</organism>
<name>Y1282_METMP</name>
<reference key="1">
    <citation type="journal article" date="2004" name="J. Bacteriol.">
        <title>Complete genome sequence of the genetically tractable hydrogenotrophic methanogen Methanococcus maripaludis.</title>
        <authorList>
            <person name="Hendrickson E.L."/>
            <person name="Kaul R."/>
            <person name="Zhou Y."/>
            <person name="Bovee D."/>
            <person name="Chapman P."/>
            <person name="Chung J."/>
            <person name="Conway de Macario E."/>
            <person name="Dodsworth J.A."/>
            <person name="Gillett W."/>
            <person name="Graham D.E."/>
            <person name="Hackett M."/>
            <person name="Haydock A.K."/>
            <person name="Kang A."/>
            <person name="Land M.L."/>
            <person name="Levy R."/>
            <person name="Lie T.J."/>
            <person name="Major T.A."/>
            <person name="Moore B.C."/>
            <person name="Porat I."/>
            <person name="Palmeiri A."/>
            <person name="Rouse G."/>
            <person name="Saenphimmachak C."/>
            <person name="Soell D."/>
            <person name="Van Dien S."/>
            <person name="Wang T."/>
            <person name="Whitman W.B."/>
            <person name="Xia Q."/>
            <person name="Zhang Y."/>
            <person name="Larimer F.W."/>
            <person name="Olson M.V."/>
            <person name="Leigh J.A."/>
        </authorList>
    </citation>
    <scope>NUCLEOTIDE SEQUENCE [LARGE SCALE GENOMIC DNA]</scope>
    <source>
        <strain>DSM 14266 / JCM 13030 / NBRC 101832 / S2 / LL</strain>
    </source>
</reference>
<dbReference type="EMBL" id="BX950229">
    <property type="protein sequence ID" value="CAF30838.1"/>
    <property type="molecule type" value="Genomic_DNA"/>
</dbReference>
<dbReference type="RefSeq" id="WP_011171226.1">
    <property type="nucleotide sequence ID" value="NC_005791.1"/>
</dbReference>
<dbReference type="SMR" id="Q6LXR7"/>
<dbReference type="STRING" id="267377.MMP1282"/>
<dbReference type="EnsemblBacteria" id="CAF30838">
    <property type="protein sequence ID" value="CAF30838"/>
    <property type="gene ID" value="MMP1282"/>
</dbReference>
<dbReference type="GeneID" id="2761258"/>
<dbReference type="KEGG" id="mmp:MMP1282"/>
<dbReference type="PATRIC" id="fig|267377.15.peg.1315"/>
<dbReference type="eggNOG" id="arCOG01045">
    <property type="taxonomic scope" value="Archaea"/>
</dbReference>
<dbReference type="HOGENOM" id="CLU_096329_1_0_2"/>
<dbReference type="OrthoDB" id="85381at2157"/>
<dbReference type="Proteomes" id="UP000000590">
    <property type="component" value="Chromosome"/>
</dbReference>
<dbReference type="GO" id="GO:0005524">
    <property type="term" value="F:ATP binding"/>
    <property type="evidence" value="ECO:0007669"/>
    <property type="project" value="UniProtKB-UniRule"/>
</dbReference>
<dbReference type="Gene3D" id="3.40.50.300">
    <property type="entry name" value="P-loop containing nucleotide triphosphate hydrolases"/>
    <property type="match status" value="1"/>
</dbReference>
<dbReference type="HAMAP" id="MF_01111">
    <property type="entry name" value="UPF0200"/>
    <property type="match status" value="1"/>
</dbReference>
<dbReference type="InterPro" id="IPR022970">
    <property type="entry name" value="NTP_hydrolase-rel"/>
</dbReference>
<dbReference type="InterPro" id="IPR027417">
    <property type="entry name" value="P-loop_NTPase"/>
</dbReference>
<dbReference type="PANTHER" id="PTHR41930:SF1">
    <property type="entry name" value="DEPHOSPHO-COA KINASE"/>
    <property type="match status" value="1"/>
</dbReference>
<dbReference type="PANTHER" id="PTHR41930">
    <property type="entry name" value="UPF0200 PROTEIN MJ1399"/>
    <property type="match status" value="1"/>
</dbReference>
<dbReference type="Pfam" id="PF13207">
    <property type="entry name" value="AAA_17"/>
    <property type="match status" value="1"/>
</dbReference>
<dbReference type="SUPFAM" id="SSF52540">
    <property type="entry name" value="P-loop containing nucleoside triphosphate hydrolases"/>
    <property type="match status" value="1"/>
</dbReference>
<evidence type="ECO:0000255" key="1">
    <source>
        <dbReference type="HAMAP-Rule" id="MF_01111"/>
    </source>
</evidence>
<keyword id="KW-0067">ATP-binding</keyword>
<keyword id="KW-0547">Nucleotide-binding</keyword>
<keyword id="KW-1185">Reference proteome</keyword>
<gene>
    <name type="ordered locus">MMP1282</name>
</gene>
<comment type="similarity">
    <text evidence="1">Belongs to the UPF0200 family.</text>
</comment>
<proteinExistence type="inferred from homology"/>
<feature type="chain" id="PRO_1000065150" description="UPF0200 protein MMP1282">
    <location>
        <begin position="1"/>
        <end position="183"/>
    </location>
</feature>
<feature type="binding site" evidence="1">
    <location>
        <begin position="8"/>
        <end position="15"/>
    </location>
    <ligand>
        <name>ATP</name>
        <dbReference type="ChEBI" id="CHEBI:30616"/>
    </ligand>
</feature>